<proteinExistence type="inferred from homology"/>
<comment type="function">
    <text evidence="1">Single strand-specific metallo-endoribonuclease involved in late-stage 70S ribosome quality control and in maturation of the 3' terminus of the 16S rRNA.</text>
</comment>
<comment type="cofactor">
    <cofactor evidence="1">
        <name>Zn(2+)</name>
        <dbReference type="ChEBI" id="CHEBI:29105"/>
    </cofactor>
    <text evidence="1">Binds 1 zinc ion.</text>
</comment>
<comment type="subcellular location">
    <subcellularLocation>
        <location evidence="1">Cytoplasm</location>
    </subcellularLocation>
</comment>
<comment type="similarity">
    <text evidence="1">Belongs to the endoribonuclease YbeY family.</text>
</comment>
<keyword id="KW-0963">Cytoplasm</keyword>
<keyword id="KW-0255">Endonuclease</keyword>
<keyword id="KW-0378">Hydrolase</keyword>
<keyword id="KW-0479">Metal-binding</keyword>
<keyword id="KW-0540">Nuclease</keyword>
<keyword id="KW-0690">Ribosome biogenesis</keyword>
<keyword id="KW-0698">rRNA processing</keyword>
<keyword id="KW-0862">Zinc</keyword>
<accession>Q57RQ9</accession>
<name>YBEY_SALCH</name>
<reference key="1">
    <citation type="journal article" date="2005" name="Nucleic Acids Res.">
        <title>The genome sequence of Salmonella enterica serovar Choleraesuis, a highly invasive and resistant zoonotic pathogen.</title>
        <authorList>
            <person name="Chiu C.-H."/>
            <person name="Tang P."/>
            <person name="Chu C."/>
            <person name="Hu S."/>
            <person name="Bao Q."/>
            <person name="Yu J."/>
            <person name="Chou Y.-Y."/>
            <person name="Wang H.-S."/>
            <person name="Lee Y.-S."/>
        </authorList>
    </citation>
    <scope>NUCLEOTIDE SEQUENCE [LARGE SCALE GENOMIC DNA]</scope>
    <source>
        <strain>SC-B67</strain>
    </source>
</reference>
<organism>
    <name type="scientific">Salmonella choleraesuis (strain SC-B67)</name>
    <dbReference type="NCBI Taxonomy" id="321314"/>
    <lineage>
        <taxon>Bacteria</taxon>
        <taxon>Pseudomonadati</taxon>
        <taxon>Pseudomonadota</taxon>
        <taxon>Gammaproteobacteria</taxon>
        <taxon>Enterobacterales</taxon>
        <taxon>Enterobacteriaceae</taxon>
        <taxon>Salmonella</taxon>
    </lineage>
</organism>
<sequence>MSQVILDLQLACENHAGLPDEAQFQRWLDGVIPQFQEEAEVTIRLVDEAESHDLNLTYRGKDKPTNVLSFPFEAPPGIEMPLLGDLIICRQVVEQEAQEQSKPLEAHWAHMVVHGSLHLLGYDHIDDDEAEEMESLETEIMLAMGYEDPYIAEKIAE</sequence>
<dbReference type="EC" id="3.1.-.-" evidence="1"/>
<dbReference type="EMBL" id="AE017220">
    <property type="protein sequence ID" value="AAX64602.1"/>
    <property type="molecule type" value="Genomic_DNA"/>
</dbReference>
<dbReference type="RefSeq" id="WP_000084477.1">
    <property type="nucleotide sequence ID" value="NC_006905.1"/>
</dbReference>
<dbReference type="SMR" id="Q57RQ9"/>
<dbReference type="KEGG" id="sec:SCH_0696"/>
<dbReference type="HOGENOM" id="CLU_106710_0_1_6"/>
<dbReference type="Proteomes" id="UP000000538">
    <property type="component" value="Chromosome"/>
</dbReference>
<dbReference type="GO" id="GO:0005737">
    <property type="term" value="C:cytoplasm"/>
    <property type="evidence" value="ECO:0007669"/>
    <property type="project" value="UniProtKB-SubCell"/>
</dbReference>
<dbReference type="GO" id="GO:0004222">
    <property type="term" value="F:metalloendopeptidase activity"/>
    <property type="evidence" value="ECO:0007669"/>
    <property type="project" value="InterPro"/>
</dbReference>
<dbReference type="GO" id="GO:0004521">
    <property type="term" value="F:RNA endonuclease activity"/>
    <property type="evidence" value="ECO:0007669"/>
    <property type="project" value="UniProtKB-UniRule"/>
</dbReference>
<dbReference type="GO" id="GO:0008270">
    <property type="term" value="F:zinc ion binding"/>
    <property type="evidence" value="ECO:0007669"/>
    <property type="project" value="UniProtKB-UniRule"/>
</dbReference>
<dbReference type="GO" id="GO:0006364">
    <property type="term" value="P:rRNA processing"/>
    <property type="evidence" value="ECO:0007669"/>
    <property type="project" value="UniProtKB-UniRule"/>
</dbReference>
<dbReference type="Gene3D" id="3.40.390.30">
    <property type="entry name" value="Metalloproteases ('zincins'), catalytic domain"/>
    <property type="match status" value="1"/>
</dbReference>
<dbReference type="HAMAP" id="MF_00009">
    <property type="entry name" value="Endoribonucl_YbeY"/>
    <property type="match status" value="1"/>
</dbReference>
<dbReference type="InterPro" id="IPR023091">
    <property type="entry name" value="MetalPrtase_cat_dom_sf_prd"/>
</dbReference>
<dbReference type="InterPro" id="IPR002036">
    <property type="entry name" value="YbeY"/>
</dbReference>
<dbReference type="InterPro" id="IPR020549">
    <property type="entry name" value="YbeY_CS"/>
</dbReference>
<dbReference type="NCBIfam" id="TIGR00043">
    <property type="entry name" value="rRNA maturation RNase YbeY"/>
    <property type="match status" value="1"/>
</dbReference>
<dbReference type="PANTHER" id="PTHR46986">
    <property type="entry name" value="ENDORIBONUCLEASE YBEY, CHLOROPLASTIC"/>
    <property type="match status" value="1"/>
</dbReference>
<dbReference type="PANTHER" id="PTHR46986:SF1">
    <property type="entry name" value="ENDORIBONUCLEASE YBEY, CHLOROPLASTIC"/>
    <property type="match status" value="1"/>
</dbReference>
<dbReference type="Pfam" id="PF02130">
    <property type="entry name" value="YbeY"/>
    <property type="match status" value="1"/>
</dbReference>
<dbReference type="SUPFAM" id="SSF55486">
    <property type="entry name" value="Metalloproteases ('zincins'), catalytic domain"/>
    <property type="match status" value="1"/>
</dbReference>
<dbReference type="PROSITE" id="PS01306">
    <property type="entry name" value="UPF0054"/>
    <property type="match status" value="1"/>
</dbReference>
<evidence type="ECO:0000255" key="1">
    <source>
        <dbReference type="HAMAP-Rule" id="MF_00009"/>
    </source>
</evidence>
<protein>
    <recommendedName>
        <fullName evidence="1">Endoribonuclease YbeY</fullName>
        <ecNumber evidence="1">3.1.-.-</ecNumber>
    </recommendedName>
</protein>
<gene>
    <name evidence="1" type="primary">ybeY</name>
    <name type="ordered locus">SCH_0696</name>
</gene>
<feature type="chain" id="PRO_0000284302" description="Endoribonuclease YbeY">
    <location>
        <begin position="1"/>
        <end position="157"/>
    </location>
</feature>
<feature type="binding site" evidence="1">
    <location>
        <position position="114"/>
    </location>
    <ligand>
        <name>Zn(2+)</name>
        <dbReference type="ChEBI" id="CHEBI:29105"/>
        <note>catalytic</note>
    </ligand>
</feature>
<feature type="binding site" evidence="1">
    <location>
        <position position="118"/>
    </location>
    <ligand>
        <name>Zn(2+)</name>
        <dbReference type="ChEBI" id="CHEBI:29105"/>
        <note>catalytic</note>
    </ligand>
</feature>
<feature type="binding site" evidence="1">
    <location>
        <position position="124"/>
    </location>
    <ligand>
        <name>Zn(2+)</name>
        <dbReference type="ChEBI" id="CHEBI:29105"/>
        <note>catalytic</note>
    </ligand>
</feature>